<accession>B9ML77</accession>
<dbReference type="EC" id="6.3.2.1" evidence="1"/>
<dbReference type="EMBL" id="CP001393">
    <property type="protein sequence ID" value="ACM61067.1"/>
    <property type="molecule type" value="Genomic_DNA"/>
</dbReference>
<dbReference type="RefSeq" id="WP_015908352.1">
    <property type="nucleotide sequence ID" value="NC_012034.1"/>
</dbReference>
<dbReference type="SMR" id="B9ML77"/>
<dbReference type="STRING" id="521460.Athe_1980"/>
<dbReference type="GeneID" id="31773332"/>
<dbReference type="KEGG" id="ate:Athe_1980"/>
<dbReference type="eggNOG" id="COG0414">
    <property type="taxonomic scope" value="Bacteria"/>
</dbReference>
<dbReference type="HOGENOM" id="CLU_047148_0_0_9"/>
<dbReference type="UniPathway" id="UPA00028">
    <property type="reaction ID" value="UER00005"/>
</dbReference>
<dbReference type="Proteomes" id="UP000007723">
    <property type="component" value="Chromosome"/>
</dbReference>
<dbReference type="GO" id="GO:0005829">
    <property type="term" value="C:cytosol"/>
    <property type="evidence" value="ECO:0007669"/>
    <property type="project" value="TreeGrafter"/>
</dbReference>
<dbReference type="GO" id="GO:0005524">
    <property type="term" value="F:ATP binding"/>
    <property type="evidence" value="ECO:0007669"/>
    <property type="project" value="UniProtKB-KW"/>
</dbReference>
<dbReference type="GO" id="GO:0004592">
    <property type="term" value="F:pantoate-beta-alanine ligase activity"/>
    <property type="evidence" value="ECO:0007669"/>
    <property type="project" value="UniProtKB-UniRule"/>
</dbReference>
<dbReference type="GO" id="GO:0015940">
    <property type="term" value="P:pantothenate biosynthetic process"/>
    <property type="evidence" value="ECO:0007669"/>
    <property type="project" value="UniProtKB-UniRule"/>
</dbReference>
<dbReference type="CDD" id="cd00560">
    <property type="entry name" value="PanC"/>
    <property type="match status" value="1"/>
</dbReference>
<dbReference type="FunFam" id="3.30.1300.10:FF:000001">
    <property type="entry name" value="Pantothenate synthetase"/>
    <property type="match status" value="1"/>
</dbReference>
<dbReference type="FunFam" id="3.40.50.620:FF:000013">
    <property type="entry name" value="Pantothenate synthetase"/>
    <property type="match status" value="1"/>
</dbReference>
<dbReference type="Gene3D" id="3.40.50.620">
    <property type="entry name" value="HUPs"/>
    <property type="match status" value="1"/>
</dbReference>
<dbReference type="Gene3D" id="3.30.1300.10">
    <property type="entry name" value="Pantoate-beta-alanine ligase, C-terminal domain"/>
    <property type="match status" value="1"/>
</dbReference>
<dbReference type="HAMAP" id="MF_00158">
    <property type="entry name" value="PanC"/>
    <property type="match status" value="1"/>
</dbReference>
<dbReference type="InterPro" id="IPR004821">
    <property type="entry name" value="Cyt_trans-like"/>
</dbReference>
<dbReference type="InterPro" id="IPR003721">
    <property type="entry name" value="Pantoate_ligase"/>
</dbReference>
<dbReference type="InterPro" id="IPR042176">
    <property type="entry name" value="Pantoate_ligase_C"/>
</dbReference>
<dbReference type="InterPro" id="IPR014729">
    <property type="entry name" value="Rossmann-like_a/b/a_fold"/>
</dbReference>
<dbReference type="NCBIfam" id="TIGR00125">
    <property type="entry name" value="cyt_tran_rel"/>
    <property type="match status" value="1"/>
</dbReference>
<dbReference type="NCBIfam" id="TIGR00018">
    <property type="entry name" value="panC"/>
    <property type="match status" value="1"/>
</dbReference>
<dbReference type="PANTHER" id="PTHR21299">
    <property type="entry name" value="CYTIDYLATE KINASE/PANTOATE-BETA-ALANINE LIGASE"/>
    <property type="match status" value="1"/>
</dbReference>
<dbReference type="PANTHER" id="PTHR21299:SF1">
    <property type="entry name" value="PANTOATE--BETA-ALANINE LIGASE"/>
    <property type="match status" value="1"/>
</dbReference>
<dbReference type="Pfam" id="PF02569">
    <property type="entry name" value="Pantoate_ligase"/>
    <property type="match status" value="1"/>
</dbReference>
<dbReference type="SUPFAM" id="SSF52374">
    <property type="entry name" value="Nucleotidylyl transferase"/>
    <property type="match status" value="1"/>
</dbReference>
<reference key="1">
    <citation type="submission" date="2009-01" db="EMBL/GenBank/DDBJ databases">
        <title>Complete sequence of chromosome of Caldicellulosiruptor becscii DSM 6725.</title>
        <authorList>
            <person name="Lucas S."/>
            <person name="Copeland A."/>
            <person name="Lapidus A."/>
            <person name="Glavina del Rio T."/>
            <person name="Tice H."/>
            <person name="Bruce D."/>
            <person name="Goodwin L."/>
            <person name="Pitluck S."/>
            <person name="Sims D."/>
            <person name="Meincke L."/>
            <person name="Brettin T."/>
            <person name="Detter J.C."/>
            <person name="Han C."/>
            <person name="Larimer F."/>
            <person name="Land M."/>
            <person name="Hauser L."/>
            <person name="Kyrpides N."/>
            <person name="Ovchinnikova G."/>
            <person name="Kataeva I."/>
            <person name="Adams M.W.W."/>
        </authorList>
    </citation>
    <scope>NUCLEOTIDE SEQUENCE [LARGE SCALE GENOMIC DNA]</scope>
    <source>
        <strain>ATCC BAA-1888 / DSM 6725 / KCTC 15123 / Z-1320</strain>
    </source>
</reference>
<proteinExistence type="inferred from homology"/>
<evidence type="ECO:0000255" key="1">
    <source>
        <dbReference type="HAMAP-Rule" id="MF_00158"/>
    </source>
</evidence>
<name>PANC_CALBD</name>
<comment type="function">
    <text evidence="1">Catalyzes the condensation of pantoate with beta-alanine in an ATP-dependent reaction via a pantoyl-adenylate intermediate.</text>
</comment>
<comment type="catalytic activity">
    <reaction evidence="1">
        <text>(R)-pantoate + beta-alanine + ATP = (R)-pantothenate + AMP + diphosphate + H(+)</text>
        <dbReference type="Rhea" id="RHEA:10912"/>
        <dbReference type="ChEBI" id="CHEBI:15378"/>
        <dbReference type="ChEBI" id="CHEBI:15980"/>
        <dbReference type="ChEBI" id="CHEBI:29032"/>
        <dbReference type="ChEBI" id="CHEBI:30616"/>
        <dbReference type="ChEBI" id="CHEBI:33019"/>
        <dbReference type="ChEBI" id="CHEBI:57966"/>
        <dbReference type="ChEBI" id="CHEBI:456215"/>
        <dbReference type="EC" id="6.3.2.1"/>
    </reaction>
</comment>
<comment type="pathway">
    <text evidence="1">Cofactor biosynthesis; (R)-pantothenate biosynthesis; (R)-pantothenate from (R)-pantoate and beta-alanine: step 1/1.</text>
</comment>
<comment type="subunit">
    <text evidence="1">Homodimer.</text>
</comment>
<comment type="subcellular location">
    <subcellularLocation>
        <location evidence="1">Cytoplasm</location>
    </subcellularLocation>
</comment>
<comment type="miscellaneous">
    <text evidence="1">The reaction proceeds by a bi uni uni bi ping pong mechanism.</text>
</comment>
<comment type="similarity">
    <text evidence="1">Belongs to the pantothenate synthetase family.</text>
</comment>
<keyword id="KW-0067">ATP-binding</keyword>
<keyword id="KW-0963">Cytoplasm</keyword>
<keyword id="KW-0436">Ligase</keyword>
<keyword id="KW-0547">Nucleotide-binding</keyword>
<keyword id="KW-0566">Pantothenate biosynthesis</keyword>
<organism>
    <name type="scientific">Caldicellulosiruptor bescii (strain ATCC BAA-1888 / DSM 6725 / KCTC 15123 / Z-1320)</name>
    <name type="common">Anaerocellum thermophilum</name>
    <dbReference type="NCBI Taxonomy" id="521460"/>
    <lineage>
        <taxon>Bacteria</taxon>
        <taxon>Bacillati</taxon>
        <taxon>Bacillota</taxon>
        <taxon>Bacillota incertae sedis</taxon>
        <taxon>Caldicellulosiruptorales</taxon>
        <taxon>Caldicellulosiruptoraceae</taxon>
        <taxon>Caldicellulosiruptor</taxon>
    </lineage>
</organism>
<sequence length="282" mass="32242">MVVVQKIQEMKEIAKKLKKEGKSIGFVPTMGYLHEGHLSLVRLSKQQNDITIMSIFVNPIQFGPNEDYDRYPRDFERDKSLAEKEGVDYIFYPSVEEMYPEDFKTVVSVKKITEIMCGKSRPGHFDGVATVVLKLFNIVNPDRAYFGQKDAQQLAVIKQMVKDLNLDVEIVPCPIVREQDGLAMSSRNVYLSEEERKSATVLYRALNLAKEMIEKGQKDVSSIKRAMEEMILKEKYTKIDYIEFVNNDTFEIISKVEGKVLIALAVFVGKARLIDNIVVEAK</sequence>
<gene>
    <name evidence="1" type="primary">panC</name>
    <name type="ordered locus">Athe_1980</name>
</gene>
<feature type="chain" id="PRO_1000123397" description="Pantothenate synthetase">
    <location>
        <begin position="1"/>
        <end position="282"/>
    </location>
</feature>
<feature type="active site" description="Proton donor" evidence="1">
    <location>
        <position position="37"/>
    </location>
</feature>
<feature type="binding site" evidence="1">
    <location>
        <begin position="30"/>
        <end position="37"/>
    </location>
    <ligand>
        <name>ATP</name>
        <dbReference type="ChEBI" id="CHEBI:30616"/>
    </ligand>
</feature>
<feature type="binding site" evidence="1">
    <location>
        <position position="61"/>
    </location>
    <ligand>
        <name>(R)-pantoate</name>
        <dbReference type="ChEBI" id="CHEBI:15980"/>
    </ligand>
</feature>
<feature type="binding site" evidence="1">
    <location>
        <position position="61"/>
    </location>
    <ligand>
        <name>beta-alanine</name>
        <dbReference type="ChEBI" id="CHEBI:57966"/>
    </ligand>
</feature>
<feature type="binding site" evidence="1">
    <location>
        <begin position="147"/>
        <end position="150"/>
    </location>
    <ligand>
        <name>ATP</name>
        <dbReference type="ChEBI" id="CHEBI:30616"/>
    </ligand>
</feature>
<feature type="binding site" evidence="1">
    <location>
        <position position="153"/>
    </location>
    <ligand>
        <name>(R)-pantoate</name>
        <dbReference type="ChEBI" id="CHEBI:15980"/>
    </ligand>
</feature>
<feature type="binding site" evidence="1">
    <location>
        <position position="176"/>
    </location>
    <ligand>
        <name>ATP</name>
        <dbReference type="ChEBI" id="CHEBI:30616"/>
    </ligand>
</feature>
<feature type="binding site" evidence="1">
    <location>
        <begin position="184"/>
        <end position="187"/>
    </location>
    <ligand>
        <name>ATP</name>
        <dbReference type="ChEBI" id="CHEBI:30616"/>
    </ligand>
</feature>
<protein>
    <recommendedName>
        <fullName evidence="1">Pantothenate synthetase</fullName>
        <shortName evidence="1">PS</shortName>
        <ecNumber evidence="1">6.3.2.1</ecNumber>
    </recommendedName>
    <alternativeName>
        <fullName evidence="1">Pantoate--beta-alanine ligase</fullName>
    </alternativeName>
    <alternativeName>
        <fullName evidence="1">Pantoate-activating enzyme</fullName>
    </alternativeName>
</protein>